<protein>
    <recommendedName>
        <fullName evidence="2">Small ribosomal subunit protein uS3c</fullName>
    </recommendedName>
    <alternativeName>
        <fullName>30S ribosomal protein S3, chloroplastic</fullName>
    </alternativeName>
</protein>
<comment type="subunit">
    <text evidence="1">Part of the 30S ribosomal subunit.</text>
</comment>
<comment type="subcellular location">
    <subcellularLocation>
        <location>Plastid</location>
        <location>Chloroplast</location>
    </subcellularLocation>
</comment>
<comment type="similarity">
    <text evidence="2">Belongs to the universal ribosomal protein uS3 family.</text>
</comment>
<accession>A4GG84</accession>
<accession>A8W833</accession>
<reference key="1">
    <citation type="journal article" date="2007" name="BMC Genomics">
        <title>Rapid evolutionary change of common bean (Phaseolus vulgaris L) plastome, and the genomic diversification of legume chloroplasts.</title>
        <authorList>
            <person name="Guo X."/>
            <person name="Castillo-Ramirez S."/>
            <person name="Gonzalez V."/>
            <person name="Bustos P."/>
            <person name="Fernandez-Vazquez J.L."/>
            <person name="Santamaria R.I."/>
            <person name="Arellano J."/>
            <person name="Cevallos M.A."/>
            <person name="Davila G."/>
        </authorList>
    </citation>
    <scope>NUCLEOTIDE SEQUENCE [LARGE SCALE GENOMIC DNA]</scope>
    <source>
        <strain>cv. Negro Jamapa</strain>
    </source>
</reference>
<reference key="2">
    <citation type="submission" date="2007-10" db="EMBL/GenBank/DDBJ databases">
        <title>Complete nucleotide sequence of the plastid genome of the common bean, Phaseolus vulgaris.</title>
        <authorList>
            <person name="Moore M.J."/>
            <person name="Triplett E.W."/>
            <person name="Broughton W.J."/>
            <person name="Soltis P.S."/>
            <person name="Soltis D.E."/>
        </authorList>
    </citation>
    <scope>NUCLEOTIDE SEQUENCE [LARGE SCALE GENOMIC DNA]</scope>
</reference>
<feature type="chain" id="PRO_0000293953" description="Small ribosomal subunit protein uS3c">
    <location>
        <begin position="1"/>
        <end position="216"/>
    </location>
</feature>
<feature type="domain" description="KH type-2">
    <location>
        <begin position="43"/>
        <end position="118"/>
    </location>
</feature>
<proteinExistence type="inferred from homology"/>
<organism>
    <name type="scientific">Phaseolus vulgaris</name>
    <name type="common">Kidney bean</name>
    <name type="synonym">French bean</name>
    <dbReference type="NCBI Taxonomy" id="3885"/>
    <lineage>
        <taxon>Eukaryota</taxon>
        <taxon>Viridiplantae</taxon>
        <taxon>Streptophyta</taxon>
        <taxon>Embryophyta</taxon>
        <taxon>Tracheophyta</taxon>
        <taxon>Spermatophyta</taxon>
        <taxon>Magnoliopsida</taxon>
        <taxon>eudicotyledons</taxon>
        <taxon>Gunneridae</taxon>
        <taxon>Pentapetalae</taxon>
        <taxon>rosids</taxon>
        <taxon>fabids</taxon>
        <taxon>Fabales</taxon>
        <taxon>Fabaceae</taxon>
        <taxon>Papilionoideae</taxon>
        <taxon>50 kb inversion clade</taxon>
        <taxon>NPAAA clade</taxon>
        <taxon>indigoferoid/millettioid clade</taxon>
        <taxon>Phaseoleae</taxon>
        <taxon>Phaseolus</taxon>
    </lineage>
</organism>
<sequence>MGQKINPLGFRLGTTQSHDSIWFAQPTKYSENIQEDKKIRDWIKNYIQKNIRISSGVEGIGEIKIQKRIDLIQVIIYMGFPKLLIEGKPHKIEEFQTNMHKKLNCVNKKLNIAIVKITNAYKHPNILAEFIAGQLKNRVSFRKAMKKAIELTEQAGTKGVQVQIAGRIDGKEIARVEWIREGRVPLQTIRAKIEYCCYTVRTIYGILGIKVWIFSK</sequence>
<geneLocation type="chloroplast"/>
<evidence type="ECO:0000250" key="1"/>
<evidence type="ECO:0000305" key="2"/>
<name>RR3_PHAVU</name>
<dbReference type="EMBL" id="DQ886273">
    <property type="protein sequence ID" value="ABH88065.1"/>
    <property type="molecule type" value="Genomic_DNA"/>
</dbReference>
<dbReference type="EMBL" id="EU196765">
    <property type="protein sequence ID" value="ABW22803.1"/>
    <property type="molecule type" value="Genomic_DNA"/>
</dbReference>
<dbReference type="RefSeq" id="YP_001122785.1">
    <property type="nucleotide sequence ID" value="NC_009259.1"/>
</dbReference>
<dbReference type="SMR" id="A4GG84"/>
<dbReference type="GeneID" id="4961757"/>
<dbReference type="KEGG" id="pvu:4961757"/>
<dbReference type="eggNOG" id="ENOG502QV63">
    <property type="taxonomic scope" value="Eukaryota"/>
</dbReference>
<dbReference type="PhylomeDB" id="A4GG84"/>
<dbReference type="GO" id="GO:0009507">
    <property type="term" value="C:chloroplast"/>
    <property type="evidence" value="ECO:0007669"/>
    <property type="project" value="UniProtKB-SubCell"/>
</dbReference>
<dbReference type="GO" id="GO:0022627">
    <property type="term" value="C:cytosolic small ribosomal subunit"/>
    <property type="evidence" value="ECO:0007669"/>
    <property type="project" value="TreeGrafter"/>
</dbReference>
<dbReference type="GO" id="GO:0019843">
    <property type="term" value="F:rRNA binding"/>
    <property type="evidence" value="ECO:0007669"/>
    <property type="project" value="UniProtKB-UniRule"/>
</dbReference>
<dbReference type="GO" id="GO:0003735">
    <property type="term" value="F:structural constituent of ribosome"/>
    <property type="evidence" value="ECO:0007669"/>
    <property type="project" value="InterPro"/>
</dbReference>
<dbReference type="GO" id="GO:0006412">
    <property type="term" value="P:translation"/>
    <property type="evidence" value="ECO:0007669"/>
    <property type="project" value="UniProtKB-UniRule"/>
</dbReference>
<dbReference type="CDD" id="cd02412">
    <property type="entry name" value="KH-II_30S_S3"/>
    <property type="match status" value="1"/>
</dbReference>
<dbReference type="FunFam" id="3.30.1140.32:FF:000003">
    <property type="entry name" value="30S ribosomal protein S3, chloroplastic"/>
    <property type="match status" value="1"/>
</dbReference>
<dbReference type="FunFam" id="3.30.300.20:FF:000008">
    <property type="entry name" value="30S ribosomal protein S3, chloroplastic"/>
    <property type="match status" value="1"/>
</dbReference>
<dbReference type="Gene3D" id="3.30.300.20">
    <property type="match status" value="1"/>
</dbReference>
<dbReference type="Gene3D" id="3.30.1140.32">
    <property type="entry name" value="Ribosomal protein S3, C-terminal domain"/>
    <property type="match status" value="1"/>
</dbReference>
<dbReference type="HAMAP" id="MF_01309_B">
    <property type="entry name" value="Ribosomal_uS3_B"/>
    <property type="match status" value="1"/>
</dbReference>
<dbReference type="InterPro" id="IPR015946">
    <property type="entry name" value="KH_dom-like_a/b"/>
</dbReference>
<dbReference type="InterPro" id="IPR004044">
    <property type="entry name" value="KH_dom_type_2"/>
</dbReference>
<dbReference type="InterPro" id="IPR009019">
    <property type="entry name" value="KH_sf_prok-type"/>
</dbReference>
<dbReference type="InterPro" id="IPR036419">
    <property type="entry name" value="Ribosomal_S3_C_sf"/>
</dbReference>
<dbReference type="InterPro" id="IPR005704">
    <property type="entry name" value="Ribosomal_uS3_bac-typ"/>
</dbReference>
<dbReference type="InterPro" id="IPR001351">
    <property type="entry name" value="Ribosomal_uS3_C"/>
</dbReference>
<dbReference type="InterPro" id="IPR018280">
    <property type="entry name" value="Ribosomal_uS3_CS"/>
</dbReference>
<dbReference type="NCBIfam" id="TIGR01009">
    <property type="entry name" value="rpsC_bact"/>
    <property type="match status" value="1"/>
</dbReference>
<dbReference type="PANTHER" id="PTHR11760">
    <property type="entry name" value="30S/40S RIBOSOMAL PROTEIN S3"/>
    <property type="match status" value="1"/>
</dbReference>
<dbReference type="PANTHER" id="PTHR11760:SF19">
    <property type="entry name" value="SMALL RIBOSOMAL SUBUNIT PROTEIN US3C"/>
    <property type="match status" value="1"/>
</dbReference>
<dbReference type="Pfam" id="PF00189">
    <property type="entry name" value="Ribosomal_S3_C"/>
    <property type="match status" value="1"/>
</dbReference>
<dbReference type="SUPFAM" id="SSF54814">
    <property type="entry name" value="Prokaryotic type KH domain (KH-domain type II)"/>
    <property type="match status" value="1"/>
</dbReference>
<dbReference type="SUPFAM" id="SSF54821">
    <property type="entry name" value="Ribosomal protein S3 C-terminal domain"/>
    <property type="match status" value="1"/>
</dbReference>
<dbReference type="PROSITE" id="PS50823">
    <property type="entry name" value="KH_TYPE_2"/>
    <property type="match status" value="1"/>
</dbReference>
<dbReference type="PROSITE" id="PS00548">
    <property type="entry name" value="RIBOSOMAL_S3"/>
    <property type="match status" value="1"/>
</dbReference>
<gene>
    <name type="primary">rps3</name>
</gene>
<keyword id="KW-0150">Chloroplast</keyword>
<keyword id="KW-0934">Plastid</keyword>
<keyword id="KW-0687">Ribonucleoprotein</keyword>
<keyword id="KW-0689">Ribosomal protein</keyword>
<keyword id="KW-0694">RNA-binding</keyword>
<keyword id="KW-0699">rRNA-binding</keyword>